<evidence type="ECO:0000250" key="1"/>
<evidence type="ECO:0000256" key="2">
    <source>
        <dbReference type="SAM" id="MobiDB-lite"/>
    </source>
</evidence>
<evidence type="ECO:0000305" key="3"/>
<accession>Q4KLQ5</accession>
<organism>
    <name type="scientific">Xenopus laevis</name>
    <name type="common">African clawed frog</name>
    <dbReference type="NCBI Taxonomy" id="8355"/>
    <lineage>
        <taxon>Eukaryota</taxon>
        <taxon>Metazoa</taxon>
        <taxon>Chordata</taxon>
        <taxon>Craniata</taxon>
        <taxon>Vertebrata</taxon>
        <taxon>Euteleostomi</taxon>
        <taxon>Amphibia</taxon>
        <taxon>Batrachia</taxon>
        <taxon>Anura</taxon>
        <taxon>Pipoidea</taxon>
        <taxon>Pipidae</taxon>
        <taxon>Xenopodinae</taxon>
        <taxon>Xenopus</taxon>
        <taxon>Xenopus</taxon>
    </lineage>
</organism>
<keyword id="KW-1185">Reference proteome</keyword>
<keyword id="KW-0677">Repeat</keyword>
<keyword id="KW-0853">WD repeat</keyword>
<comment type="function">
    <text evidence="1">Specifically binds 5-hydroxymethylcytosine (5hmC), suggesting that it acts as a specific reader of 5hmC.</text>
</comment>
<comment type="similarity">
    <text evidence="3">Belongs to the WD repeat DDB2/WDR76 family.</text>
</comment>
<sequence>MEEKKETAQMTQETTPKDSRVIEGVRRSSRRSHAEPHSPKKAYEVRDRRQKRSLERDQHEDGTPIKRARLPREQSSTRKHPIVLLSREIPEYHTETMPTPKKNYKLIPEQVTELSEYEIERLNNIKENAKFLQSLKLLETASSLRSPPKKQNQTRGIKREKQTKVERQPIIRRSMRLQRIDPSGAPLPNVIQPPEPLLEEHPVKPPGPLEMVPTNLKGDCISVEEFLKTWASTSKESLRSLKKQPSKDFKRYTACLQTMTLREETVAKVVQNRIFSVAIHPSESRTIVAAGDKWGQIGLWDLADLSGNDGVYVFEPHSRPISCMSFSPVNSAQLFSLSYDGTVRCGDVCRSVFDEVYRDEQDSFSSFDYLSADCSVLIVSHWDSYLSVVDCRTPGTSCEQRASLNMRSARTTSVHPVNRDLCVVAGAGDVCIFDVRQLKKKAQPVLSLTGHSKSVASAYFSPVTGNRILTTCADDYIRVYDSSSLCSEAPLLTAFRHNNNTGRWLTRFRAVWDPKQESCFVVGSMARPRQIEVYNESGKLEHSFWDSEHLGSVCSINAMHPTRNLLVGGNSSGRLHVFHD</sequence>
<name>WDR76_XENLA</name>
<protein>
    <recommendedName>
        <fullName>WD repeat-containing protein 76</fullName>
    </recommendedName>
</protein>
<proteinExistence type="evidence at transcript level"/>
<feature type="chain" id="PRO_0000351095" description="WD repeat-containing protein 76">
    <location>
        <begin position="1"/>
        <end position="580"/>
    </location>
</feature>
<feature type="repeat" description="WD 1">
    <location>
        <begin position="269"/>
        <end position="310"/>
    </location>
</feature>
<feature type="repeat" description="WD 2">
    <location>
        <begin position="316"/>
        <end position="356"/>
    </location>
</feature>
<feature type="repeat" description="WD 3">
    <location>
        <begin position="359"/>
        <end position="399"/>
    </location>
</feature>
<feature type="repeat" description="WD 4">
    <location>
        <begin position="404"/>
        <end position="443"/>
    </location>
</feature>
<feature type="repeat" description="WD 5">
    <location>
        <begin position="450"/>
        <end position="490"/>
    </location>
</feature>
<feature type="repeat" description="WD 6">
    <location>
        <begin position="500"/>
        <end position="544"/>
    </location>
</feature>
<feature type="repeat" description="WD 7">
    <location>
        <begin position="548"/>
        <end position="580"/>
    </location>
</feature>
<feature type="region of interest" description="Disordered" evidence="2">
    <location>
        <begin position="1"/>
        <end position="82"/>
    </location>
</feature>
<feature type="region of interest" description="Disordered" evidence="2">
    <location>
        <begin position="142"/>
        <end position="165"/>
    </location>
</feature>
<feature type="compositionally biased region" description="Basic and acidic residues" evidence="2">
    <location>
        <begin position="15"/>
        <end position="76"/>
    </location>
</feature>
<feature type="compositionally biased region" description="Polar residues" evidence="2">
    <location>
        <begin position="142"/>
        <end position="155"/>
    </location>
</feature>
<dbReference type="EMBL" id="BC099051">
    <property type="protein sequence ID" value="AAH99051.1"/>
    <property type="molecule type" value="mRNA"/>
</dbReference>
<dbReference type="RefSeq" id="NP_001090070.1">
    <property type="nucleotide sequence ID" value="NM_001096601.1"/>
</dbReference>
<dbReference type="SMR" id="Q4KLQ5"/>
<dbReference type="BioGRID" id="592925">
    <property type="interactions" value="1"/>
</dbReference>
<dbReference type="DNASU" id="735144"/>
<dbReference type="GeneID" id="735144"/>
<dbReference type="KEGG" id="xla:735144"/>
<dbReference type="AGR" id="Xenbase:XB-GENE-5868447"/>
<dbReference type="CTD" id="735144"/>
<dbReference type="Xenbase" id="XB-GENE-5868447">
    <property type="gene designation" value="wdr76.S"/>
</dbReference>
<dbReference type="OrthoDB" id="9890280at2759"/>
<dbReference type="Proteomes" id="UP000186698">
    <property type="component" value="Chromosome 3S"/>
</dbReference>
<dbReference type="Bgee" id="735144">
    <property type="expression patterns" value="Expressed in egg cell and 19 other cell types or tissues"/>
</dbReference>
<dbReference type="GO" id="GO:0005634">
    <property type="term" value="C:nucleus"/>
    <property type="evidence" value="ECO:0000318"/>
    <property type="project" value="GO_Central"/>
</dbReference>
<dbReference type="GO" id="GO:0003677">
    <property type="term" value="F:DNA binding"/>
    <property type="evidence" value="ECO:0000318"/>
    <property type="project" value="GO_Central"/>
</dbReference>
<dbReference type="GO" id="GO:2000001">
    <property type="term" value="P:regulation of DNA damage checkpoint"/>
    <property type="evidence" value="ECO:0000318"/>
    <property type="project" value="GO_Central"/>
</dbReference>
<dbReference type="FunFam" id="2.130.10.10:FF:000180">
    <property type="entry name" value="WD repeat-containing protein 76"/>
    <property type="match status" value="1"/>
</dbReference>
<dbReference type="Gene3D" id="2.130.10.10">
    <property type="entry name" value="YVTN repeat-like/Quinoprotein amine dehydrogenase"/>
    <property type="match status" value="1"/>
</dbReference>
<dbReference type="InterPro" id="IPR015943">
    <property type="entry name" value="WD40/YVTN_repeat-like_dom_sf"/>
</dbReference>
<dbReference type="InterPro" id="IPR036322">
    <property type="entry name" value="WD40_repeat_dom_sf"/>
</dbReference>
<dbReference type="InterPro" id="IPR001680">
    <property type="entry name" value="WD40_rpt"/>
</dbReference>
<dbReference type="InterPro" id="IPR050853">
    <property type="entry name" value="WD_repeat_DNA-damage-binding"/>
</dbReference>
<dbReference type="PANTHER" id="PTHR14773">
    <property type="entry name" value="WD REPEAT-CONTAINING PROTEIN 76"/>
    <property type="match status" value="1"/>
</dbReference>
<dbReference type="PANTHER" id="PTHR14773:SF0">
    <property type="entry name" value="WD REPEAT-CONTAINING PROTEIN 76"/>
    <property type="match status" value="1"/>
</dbReference>
<dbReference type="Pfam" id="PF00400">
    <property type="entry name" value="WD40"/>
    <property type="match status" value="2"/>
</dbReference>
<dbReference type="SMART" id="SM00320">
    <property type="entry name" value="WD40"/>
    <property type="match status" value="4"/>
</dbReference>
<dbReference type="SUPFAM" id="SSF50978">
    <property type="entry name" value="WD40 repeat-like"/>
    <property type="match status" value="1"/>
</dbReference>
<dbReference type="PROSITE" id="PS50082">
    <property type="entry name" value="WD_REPEATS_2"/>
    <property type="match status" value="1"/>
</dbReference>
<dbReference type="PROSITE" id="PS50294">
    <property type="entry name" value="WD_REPEATS_REGION"/>
    <property type="match status" value="1"/>
</dbReference>
<reference key="1">
    <citation type="submission" date="2005-07" db="EMBL/GenBank/DDBJ databases">
        <authorList>
            <consortium name="NIH - Xenopus Gene Collection (XGC) project"/>
        </authorList>
    </citation>
    <scope>NUCLEOTIDE SEQUENCE [LARGE SCALE MRNA]</scope>
    <source>
        <tissue>Egg</tissue>
    </source>
</reference>
<gene>
    <name type="primary">wdr76</name>
</gene>